<dbReference type="EC" id="2.1.1.-" evidence="1"/>
<dbReference type="EMBL" id="AY034788">
    <property type="protein sequence ID" value="AAK61538.1"/>
    <property type="molecule type" value="Genomic_DNA"/>
</dbReference>
<dbReference type="EMBL" id="AY181247">
    <property type="protein sequence ID" value="AAO25590.1"/>
    <property type="molecule type" value="Genomic_DNA"/>
</dbReference>
<dbReference type="EMBL" id="CR380948">
    <property type="protein sequence ID" value="CAG57923.1"/>
    <property type="molecule type" value="Genomic_DNA"/>
</dbReference>
<dbReference type="RefSeq" id="XP_445023.1">
    <property type="nucleotide sequence ID" value="XM_445023.1"/>
</dbReference>
<dbReference type="SMR" id="Q96UP2"/>
<dbReference type="FunCoup" id="Q96UP2">
    <property type="interactions" value="1032"/>
</dbReference>
<dbReference type="STRING" id="284593.Q96UP2"/>
<dbReference type="EnsemblFungi" id="CAGL0B01232g-T">
    <property type="protein sequence ID" value="CAGL0B01232g-T-p1"/>
    <property type="gene ID" value="CAGL0B01232g"/>
</dbReference>
<dbReference type="GeneID" id="2886681"/>
<dbReference type="KEGG" id="cgr:2886681"/>
<dbReference type="CGD" id="CAL0127832">
    <property type="gene designation" value="EMG1"/>
</dbReference>
<dbReference type="VEuPathDB" id="FungiDB:CAGL0B01232g"/>
<dbReference type="eggNOG" id="KOG3073">
    <property type="taxonomic scope" value="Eukaryota"/>
</dbReference>
<dbReference type="HOGENOM" id="CLU_055846_1_1_1"/>
<dbReference type="InParanoid" id="Q96UP2"/>
<dbReference type="OMA" id="VHNTFEL"/>
<dbReference type="BRENDA" id="2.1.1.260">
    <property type="organism ID" value="1113"/>
</dbReference>
<dbReference type="Proteomes" id="UP000002428">
    <property type="component" value="Chromosome B"/>
</dbReference>
<dbReference type="GO" id="GO:0005730">
    <property type="term" value="C:nucleolus"/>
    <property type="evidence" value="ECO:0007669"/>
    <property type="project" value="UniProtKB-SubCell"/>
</dbReference>
<dbReference type="GO" id="GO:0032040">
    <property type="term" value="C:small-subunit processome"/>
    <property type="evidence" value="ECO:0007669"/>
    <property type="project" value="TreeGrafter"/>
</dbReference>
<dbReference type="GO" id="GO:0070037">
    <property type="term" value="F:rRNA (pseudouridine) methyltransferase activity"/>
    <property type="evidence" value="ECO:0000250"/>
    <property type="project" value="UniProtKB"/>
</dbReference>
<dbReference type="GO" id="GO:0019843">
    <property type="term" value="F:rRNA binding"/>
    <property type="evidence" value="ECO:0007669"/>
    <property type="project" value="UniProtKB-KW"/>
</dbReference>
<dbReference type="GO" id="GO:0070475">
    <property type="term" value="P:rRNA base methylation"/>
    <property type="evidence" value="ECO:0007669"/>
    <property type="project" value="InterPro"/>
</dbReference>
<dbReference type="CDD" id="cd18088">
    <property type="entry name" value="Nep1-like"/>
    <property type="match status" value="1"/>
</dbReference>
<dbReference type="FunFam" id="3.40.1280.10:FF:000003">
    <property type="entry name" value="Ribosomal RNA small subunit methyltransferase"/>
    <property type="match status" value="1"/>
</dbReference>
<dbReference type="Gene3D" id="3.40.1280.10">
    <property type="match status" value="1"/>
</dbReference>
<dbReference type="InterPro" id="IPR029028">
    <property type="entry name" value="Alpha/beta_knot_MTases"/>
</dbReference>
<dbReference type="InterPro" id="IPR005304">
    <property type="entry name" value="Rbsml_bgen_MeTrfase_EMG1/NEP1"/>
</dbReference>
<dbReference type="InterPro" id="IPR029026">
    <property type="entry name" value="tRNA_m1G_MTases_N"/>
</dbReference>
<dbReference type="PANTHER" id="PTHR12636">
    <property type="entry name" value="NEP1/MRA1"/>
    <property type="match status" value="1"/>
</dbReference>
<dbReference type="PANTHER" id="PTHR12636:SF5">
    <property type="entry name" value="RIBOSOMAL RNA SMALL SUBUNIT METHYLTRANSFERASE NEP1"/>
    <property type="match status" value="1"/>
</dbReference>
<dbReference type="Pfam" id="PF03587">
    <property type="entry name" value="EMG1"/>
    <property type="match status" value="1"/>
</dbReference>
<dbReference type="SUPFAM" id="SSF75217">
    <property type="entry name" value="alpha/beta knot"/>
    <property type="match status" value="1"/>
</dbReference>
<evidence type="ECO:0000250" key="1">
    <source>
        <dbReference type="UniProtKB" id="Q06287"/>
    </source>
</evidence>
<evidence type="ECO:0000305" key="2"/>
<accession>Q96UP2</accession>
<name>NEP1_CANGA</name>
<organism>
    <name type="scientific">Candida glabrata (strain ATCC 2001 / BCRC 20586 / JCM 3761 / NBRC 0622 / NRRL Y-65 / CBS 138)</name>
    <name type="common">Yeast</name>
    <name type="synonym">Nakaseomyces glabratus</name>
    <dbReference type="NCBI Taxonomy" id="284593"/>
    <lineage>
        <taxon>Eukaryota</taxon>
        <taxon>Fungi</taxon>
        <taxon>Dikarya</taxon>
        <taxon>Ascomycota</taxon>
        <taxon>Saccharomycotina</taxon>
        <taxon>Saccharomycetes</taxon>
        <taxon>Saccharomycetales</taxon>
        <taxon>Saccharomycetaceae</taxon>
        <taxon>Nakaseomyces</taxon>
    </lineage>
</organism>
<reference key="1">
    <citation type="journal article" date="2002" name="Curr. Genet.">
        <title>Nep1p (Emg1p), a novel protein conserved in eukaryotes and archaea, is involved in ribosome biogenesis.</title>
        <authorList>
            <person name="Eschrich D."/>
            <person name="Buchhaupt M."/>
            <person name="Koetter P."/>
            <person name="Entian K.-D."/>
        </authorList>
    </citation>
    <scope>NUCLEOTIDE SEQUENCE [GENOMIC DNA]</scope>
</reference>
<reference key="2">
    <citation type="journal article" date="2003" name="Genome Biol.">
        <title>Evidence from comparative genomics for a complete sexual cycle in the 'asexual' pathogenic yeast Candida glabrata.</title>
        <authorList>
            <person name="Wong S."/>
            <person name="Fares M.A."/>
            <person name="Zimmermann W."/>
            <person name="Butler G."/>
            <person name="Wolfe K.H."/>
        </authorList>
    </citation>
    <scope>NUCLEOTIDE SEQUENCE [GENOMIC DNA]</scope>
    <source>
        <strain>ATCC 2001 / BCRC 20586 / JCM 3761 / NBRC 0622 / NRRL Y-65 / CBS 138</strain>
    </source>
</reference>
<reference key="3">
    <citation type="journal article" date="2004" name="Nature">
        <title>Genome evolution in yeasts.</title>
        <authorList>
            <person name="Dujon B."/>
            <person name="Sherman D."/>
            <person name="Fischer G."/>
            <person name="Durrens P."/>
            <person name="Casaregola S."/>
            <person name="Lafontaine I."/>
            <person name="de Montigny J."/>
            <person name="Marck C."/>
            <person name="Neuveglise C."/>
            <person name="Talla E."/>
            <person name="Goffard N."/>
            <person name="Frangeul L."/>
            <person name="Aigle M."/>
            <person name="Anthouard V."/>
            <person name="Babour A."/>
            <person name="Barbe V."/>
            <person name="Barnay S."/>
            <person name="Blanchin S."/>
            <person name="Beckerich J.-M."/>
            <person name="Beyne E."/>
            <person name="Bleykasten C."/>
            <person name="Boisrame A."/>
            <person name="Boyer J."/>
            <person name="Cattolico L."/>
            <person name="Confanioleri F."/>
            <person name="de Daruvar A."/>
            <person name="Despons L."/>
            <person name="Fabre E."/>
            <person name="Fairhead C."/>
            <person name="Ferry-Dumazet H."/>
            <person name="Groppi A."/>
            <person name="Hantraye F."/>
            <person name="Hennequin C."/>
            <person name="Jauniaux N."/>
            <person name="Joyet P."/>
            <person name="Kachouri R."/>
            <person name="Kerrest A."/>
            <person name="Koszul R."/>
            <person name="Lemaire M."/>
            <person name="Lesur I."/>
            <person name="Ma L."/>
            <person name="Muller H."/>
            <person name="Nicaud J.-M."/>
            <person name="Nikolski M."/>
            <person name="Oztas S."/>
            <person name="Ozier-Kalogeropoulos O."/>
            <person name="Pellenz S."/>
            <person name="Potier S."/>
            <person name="Richard G.-F."/>
            <person name="Straub M.-L."/>
            <person name="Suleau A."/>
            <person name="Swennen D."/>
            <person name="Tekaia F."/>
            <person name="Wesolowski-Louvel M."/>
            <person name="Westhof E."/>
            <person name="Wirth B."/>
            <person name="Zeniou-Meyer M."/>
            <person name="Zivanovic Y."/>
            <person name="Bolotin-Fukuhara M."/>
            <person name="Thierry A."/>
            <person name="Bouchier C."/>
            <person name="Caudron B."/>
            <person name="Scarpelli C."/>
            <person name="Gaillardin C."/>
            <person name="Weissenbach J."/>
            <person name="Wincker P."/>
            <person name="Souciet J.-L."/>
        </authorList>
    </citation>
    <scope>NUCLEOTIDE SEQUENCE [LARGE SCALE GENOMIC DNA]</scope>
    <source>
        <strain>ATCC 2001 / BCRC 20586 / JCM 3761 / NBRC 0622 / NRRL Y-65 / CBS 138</strain>
    </source>
</reference>
<comment type="function">
    <text evidence="1">S-adenosyl-L-methionine-dependent pseudouridine N(1)-methyltransferase that methylates the pseudouridine corresponding to position 1189 (Psi1189) in S.cerevisiae 18S rRNA. Involved the biosynthesis of the hypermodified N1-methyl-N3-(3-amino-3-carboxypropyl) pseudouridine (m1acp3-Psi) conserved in eukaryotic 18S rRNA. Also has an essential role in 40S ribosomal subunit biogenesis independent on its methyltransferase activity, facilitating the incorporation of ribosomal protein S19 during the formation of pre-ribosomes.</text>
</comment>
<comment type="catalytic activity">
    <reaction evidence="1">
        <text>a pseudouridine in rRNA + S-adenosyl-L-methionine = an N(1)-methylpseudouridine in rRNA + S-adenosyl-L-homocysteine + H(+)</text>
        <dbReference type="Rhea" id="RHEA:46696"/>
        <dbReference type="Rhea" id="RHEA-COMP:11634"/>
        <dbReference type="Rhea" id="RHEA-COMP:13933"/>
        <dbReference type="ChEBI" id="CHEBI:15378"/>
        <dbReference type="ChEBI" id="CHEBI:57856"/>
        <dbReference type="ChEBI" id="CHEBI:59789"/>
        <dbReference type="ChEBI" id="CHEBI:65314"/>
        <dbReference type="ChEBI" id="CHEBI:74890"/>
    </reaction>
</comment>
<comment type="subunit">
    <text evidence="1">Homodimer.</text>
</comment>
<comment type="subcellular location">
    <subcellularLocation>
        <location evidence="1">Nucleus</location>
        <location evidence="1">Nucleolus</location>
    </subcellularLocation>
</comment>
<comment type="similarity">
    <text evidence="2">Belongs to the class IV-like SAM-binding methyltransferase superfamily. RNA methyltransferase NEP1 family.</text>
</comment>
<keyword id="KW-0489">Methyltransferase</keyword>
<keyword id="KW-0539">Nucleus</keyword>
<keyword id="KW-1185">Reference proteome</keyword>
<keyword id="KW-0690">Ribosome biogenesis</keyword>
<keyword id="KW-0694">RNA-binding</keyword>
<keyword id="KW-0698">rRNA processing</keyword>
<keyword id="KW-0699">rRNA-binding</keyword>
<keyword id="KW-0949">S-adenosyl-L-methionine</keyword>
<keyword id="KW-0808">Transferase</keyword>
<proteinExistence type="inferred from homology"/>
<sequence length="229" mass="25596">MVEDSKARIGGPNNSSVTKKQEPRLYVVLCEASLETYTSNDHRTSLLNCDDHQGILRKMGRDIAEARPDITHQCLLTLLDSPINKAGLLQVYILTKKNVLIEVNPSVRIPRTFKRFSGLMVQLLHKLSIRSMESSNTHLLRVVKNPVTKYLPADCRKVTLSFDAEVMRPQEYLGDKQSVCVFVGAMARGHDSFADEYVDDKIAISNYPLSASVACSKFCHGAEDAWAII</sequence>
<feature type="chain" id="PRO_0000158611" description="Ribosomal RNA small subunit methyltransferase NEP1">
    <location>
        <begin position="1"/>
        <end position="229"/>
    </location>
</feature>
<feature type="binding site" evidence="1">
    <location>
        <position position="160"/>
    </location>
    <ligand>
        <name>S-adenosyl-L-methionine</name>
        <dbReference type="ChEBI" id="CHEBI:59789"/>
    </ligand>
</feature>
<feature type="binding site" evidence="1">
    <location>
        <position position="184"/>
    </location>
    <ligand>
        <name>S-adenosyl-L-methionine</name>
        <dbReference type="ChEBI" id="CHEBI:59789"/>
    </ligand>
</feature>
<feature type="binding site" evidence="1">
    <location>
        <begin position="189"/>
        <end position="191"/>
    </location>
    <ligand>
        <name>S-adenosyl-L-methionine</name>
        <dbReference type="ChEBI" id="CHEBI:59789"/>
    </ligand>
</feature>
<feature type="binding site" evidence="1">
    <location>
        <begin position="204"/>
        <end position="209"/>
    </location>
    <ligand>
        <name>S-adenosyl-L-methionine</name>
        <dbReference type="ChEBI" id="CHEBI:59789"/>
    </ligand>
</feature>
<feature type="site" description="Interaction with substrate rRNA" evidence="1">
    <location>
        <position position="67"/>
    </location>
</feature>
<feature type="site" description="Stabilizes Arg-67" evidence="1">
    <location>
        <position position="69"/>
    </location>
</feature>
<feature type="site" description="Interaction with substrate rRNA" evidence="1">
    <location>
        <position position="108"/>
    </location>
</feature>
<feature type="site" description="Interaction with substrate rRNA" evidence="1">
    <location>
        <position position="111"/>
    </location>
</feature>
<feature type="site" description="Interaction with substrate rRNA" evidence="1">
    <location>
        <position position="115"/>
    </location>
</feature>
<gene>
    <name type="primary">NEP1</name>
    <name type="synonym">EMG1</name>
    <name type="ordered locus">CAGL0B01232g</name>
</gene>
<protein>
    <recommendedName>
        <fullName evidence="1">Ribosomal RNA small subunit methyltransferase NEP1</fullName>
        <ecNumber evidence="1">2.1.1.-</ecNumber>
    </recommendedName>
    <alternativeName>
        <fullName evidence="1">18S rRNA (pseudouridine-N1)-methyltransferase</fullName>
    </alternativeName>
</protein>